<gene>
    <name evidence="1" type="primary">psuG</name>
    <name type="ordered locus">mll0028</name>
</gene>
<proteinExistence type="inferred from homology"/>
<reference key="1">
    <citation type="journal article" date="2000" name="DNA Res.">
        <title>Complete genome structure of the nitrogen-fixing symbiotic bacterium Mesorhizobium loti.</title>
        <authorList>
            <person name="Kaneko T."/>
            <person name="Nakamura Y."/>
            <person name="Sato S."/>
            <person name="Asamizu E."/>
            <person name="Kato T."/>
            <person name="Sasamoto S."/>
            <person name="Watanabe A."/>
            <person name="Idesawa K."/>
            <person name="Ishikawa A."/>
            <person name="Kawashima K."/>
            <person name="Kimura T."/>
            <person name="Kishida Y."/>
            <person name="Kiyokawa C."/>
            <person name="Kohara M."/>
            <person name="Matsumoto M."/>
            <person name="Matsuno A."/>
            <person name="Mochizuki Y."/>
            <person name="Nakayama S."/>
            <person name="Nakazaki N."/>
            <person name="Shimpo S."/>
            <person name="Sugimoto M."/>
            <person name="Takeuchi C."/>
            <person name="Yamada M."/>
            <person name="Tabata S."/>
        </authorList>
    </citation>
    <scope>NUCLEOTIDE SEQUENCE [LARGE SCALE GENOMIC DNA]</scope>
    <source>
        <strain>LMG 29417 / CECT 9101 / MAFF 303099</strain>
    </source>
</reference>
<dbReference type="EC" id="4.2.1.70" evidence="1"/>
<dbReference type="EMBL" id="BA000012">
    <property type="protein sequence ID" value="BAB47703.1"/>
    <property type="molecule type" value="Genomic_DNA"/>
</dbReference>
<dbReference type="RefSeq" id="WP_010909073.1">
    <property type="nucleotide sequence ID" value="NC_002678.2"/>
</dbReference>
<dbReference type="SMR" id="Q98NQ8"/>
<dbReference type="KEGG" id="mlo:mll0028"/>
<dbReference type="PATRIC" id="fig|266835.9.peg.23"/>
<dbReference type="eggNOG" id="COG2313">
    <property type="taxonomic scope" value="Bacteria"/>
</dbReference>
<dbReference type="HOGENOM" id="CLU_012201_0_1_5"/>
<dbReference type="Proteomes" id="UP000000552">
    <property type="component" value="Chromosome"/>
</dbReference>
<dbReference type="GO" id="GO:0005737">
    <property type="term" value="C:cytoplasm"/>
    <property type="evidence" value="ECO:0007669"/>
    <property type="project" value="TreeGrafter"/>
</dbReference>
<dbReference type="GO" id="GO:0016798">
    <property type="term" value="F:hydrolase activity, acting on glycosyl bonds"/>
    <property type="evidence" value="ECO:0007669"/>
    <property type="project" value="UniProtKB-KW"/>
</dbReference>
<dbReference type="GO" id="GO:0046872">
    <property type="term" value="F:metal ion binding"/>
    <property type="evidence" value="ECO:0007669"/>
    <property type="project" value="UniProtKB-KW"/>
</dbReference>
<dbReference type="GO" id="GO:0004730">
    <property type="term" value="F:pseudouridylate synthase activity"/>
    <property type="evidence" value="ECO:0007669"/>
    <property type="project" value="UniProtKB-UniRule"/>
</dbReference>
<dbReference type="GO" id="GO:0046113">
    <property type="term" value="P:nucleobase catabolic process"/>
    <property type="evidence" value="ECO:0007669"/>
    <property type="project" value="UniProtKB-UniRule"/>
</dbReference>
<dbReference type="Gene3D" id="3.40.1790.10">
    <property type="entry name" value="Indigoidine synthase domain"/>
    <property type="match status" value="1"/>
</dbReference>
<dbReference type="HAMAP" id="MF_01876">
    <property type="entry name" value="PsiMP_glycosidase"/>
    <property type="match status" value="1"/>
</dbReference>
<dbReference type="InterPro" id="IPR022830">
    <property type="entry name" value="Indigdn_synthA-like"/>
</dbReference>
<dbReference type="InterPro" id="IPR007342">
    <property type="entry name" value="PsuG"/>
</dbReference>
<dbReference type="PANTHER" id="PTHR42909:SF1">
    <property type="entry name" value="CARBOHYDRATE KINASE PFKB DOMAIN-CONTAINING PROTEIN"/>
    <property type="match status" value="1"/>
</dbReference>
<dbReference type="PANTHER" id="PTHR42909">
    <property type="entry name" value="ZGC:136858"/>
    <property type="match status" value="1"/>
</dbReference>
<dbReference type="Pfam" id="PF04227">
    <property type="entry name" value="Indigoidine_A"/>
    <property type="match status" value="1"/>
</dbReference>
<dbReference type="SUPFAM" id="SSF110581">
    <property type="entry name" value="Indigoidine synthase A-like"/>
    <property type="match status" value="1"/>
</dbReference>
<evidence type="ECO:0000255" key="1">
    <source>
        <dbReference type="HAMAP-Rule" id="MF_01876"/>
    </source>
</evidence>
<feature type="chain" id="PRO_0000390540" description="Pseudouridine-5'-phosphate glycosidase">
    <location>
        <begin position="1"/>
        <end position="305"/>
    </location>
</feature>
<feature type="active site" description="Proton donor" evidence="1">
    <location>
        <position position="30"/>
    </location>
</feature>
<feature type="active site" description="Nucleophile" evidence="1">
    <location>
        <position position="164"/>
    </location>
</feature>
<feature type="binding site" evidence="1">
    <location>
        <position position="91"/>
    </location>
    <ligand>
        <name>substrate</name>
    </ligand>
</feature>
<feature type="binding site" evidence="1">
    <location>
        <position position="111"/>
    </location>
    <ligand>
        <name>substrate</name>
    </ligand>
</feature>
<feature type="binding site" evidence="1">
    <location>
        <position position="143"/>
    </location>
    <ligand>
        <name>Mn(2+)</name>
        <dbReference type="ChEBI" id="CHEBI:29035"/>
    </ligand>
</feature>
<feature type="binding site" evidence="1">
    <location>
        <begin position="145"/>
        <end position="147"/>
    </location>
    <ligand>
        <name>substrate</name>
    </ligand>
</feature>
<sequence length="305" mass="31575">MSPETARPFIDIHAPVAQALAAGRPVVALESTIITHGMPYPDNGAMAANVEKIISDGGAVPATIAVIGGRIKIGLSDGERESLAMTGDAMKLSRADLGFAVAQGRTGGTTVAATMIAAEMVGIKVFATGGIGGVHKGAEKSFDISADLDELARTPVIVVSAGAKAILDIEKTLEVLETRGVPVVGHGCETMPAFWSRQSPFRAPLTLYKPEEIAHFFRTRVALGLGGGVLVANPVPENHEIPAEEMAGYIEAAQKAAEALNVTGKAVTPFLLGKILELTGGRSLKTNIALVENNARLAAEIAKAL</sequence>
<comment type="function">
    <text evidence="1">Catalyzes the reversible cleavage of pseudouridine 5'-phosphate (PsiMP) to ribose 5-phosphate and uracil. Functions biologically in the cleavage direction, as part of a pseudouridine degradation pathway.</text>
</comment>
<comment type="catalytic activity">
    <reaction evidence="1">
        <text>D-ribose 5-phosphate + uracil = psi-UMP + H2O</text>
        <dbReference type="Rhea" id="RHEA:18337"/>
        <dbReference type="ChEBI" id="CHEBI:15377"/>
        <dbReference type="ChEBI" id="CHEBI:17568"/>
        <dbReference type="ChEBI" id="CHEBI:58380"/>
        <dbReference type="ChEBI" id="CHEBI:78346"/>
        <dbReference type="EC" id="4.2.1.70"/>
    </reaction>
</comment>
<comment type="cofactor">
    <cofactor evidence="1">
        <name>Mn(2+)</name>
        <dbReference type="ChEBI" id="CHEBI:29035"/>
    </cofactor>
    <text evidence="1">Binds 1 Mn(2+) ion per subunit.</text>
</comment>
<comment type="subunit">
    <text evidence="1">Homotrimer.</text>
</comment>
<comment type="similarity">
    <text evidence="1">Belongs to the pseudouridine-5'-phosphate glycosidase family.</text>
</comment>
<organism>
    <name type="scientific">Mesorhizobium japonicum (strain LMG 29417 / CECT 9101 / MAFF 303099)</name>
    <name type="common">Mesorhizobium loti (strain MAFF 303099)</name>
    <dbReference type="NCBI Taxonomy" id="266835"/>
    <lineage>
        <taxon>Bacteria</taxon>
        <taxon>Pseudomonadati</taxon>
        <taxon>Pseudomonadota</taxon>
        <taxon>Alphaproteobacteria</taxon>
        <taxon>Hyphomicrobiales</taxon>
        <taxon>Phyllobacteriaceae</taxon>
        <taxon>Mesorhizobium</taxon>
    </lineage>
</organism>
<name>PSUG_RHILO</name>
<keyword id="KW-0326">Glycosidase</keyword>
<keyword id="KW-0378">Hydrolase</keyword>
<keyword id="KW-0456">Lyase</keyword>
<keyword id="KW-0464">Manganese</keyword>
<keyword id="KW-0479">Metal-binding</keyword>
<protein>
    <recommendedName>
        <fullName evidence="1">Pseudouridine-5'-phosphate glycosidase</fullName>
        <shortName evidence="1">PsiMP glycosidase</shortName>
        <ecNumber evidence="1">4.2.1.70</ecNumber>
    </recommendedName>
</protein>
<accession>Q98NQ8</accession>